<protein>
    <recommendedName>
        <fullName>Glucoside xylosyltransferase 1</fullName>
        <ecNumber evidence="1">2.4.2.42</ecNumber>
    </recommendedName>
    <alternativeName>
        <fullName>Glycosyltransferase 8 domain-containing protein 3</fullName>
    </alternativeName>
    <alternativeName>
        <fullName>S33-D</fullName>
    </alternativeName>
</protein>
<sequence length="435" mass="50243">MRRYLRVVGLCLACGFCSLLYAFSQLAVSLEEGAAVGRRPQAAVASWLADGGRGTGRGAGSAGPGRTGRCKEVSLSYWNPYWMLPSDVCGVNCFWEAAFRYGLKTRPTEKMHLAVVACGDRLEETVTMLKSALIFSIKPLHVHIFAEDQLHDSFKDRLDSWSFLQRFNYSLYPITFPSDSAMEWKKLFKPCASQRLFLPLILKGVDSLLYVDTDVLFLRPVDDIWSLLERFNSTQIAAMAPEHEEPRVGWYNRFARHPYYGRTGVNSGVMLMNMTRMRRKYFKNDMTTARLQWGDILMPLLKKYKLNITWGDQDLLNIMFYHNPESLFVFPCQWNYRPDHCIYGSNCREAEEEGVFILHGNRGVYHDDKQPAFRAMYEALRNCSLEDDSVRSLLKPLELELQKTVHTYCGKTYKIFIKQLAKSIRNRYDTPPKER</sequence>
<organism>
    <name type="scientific">Rattus norvegicus</name>
    <name type="common">Rat</name>
    <dbReference type="NCBI Taxonomy" id="10116"/>
    <lineage>
        <taxon>Eukaryota</taxon>
        <taxon>Metazoa</taxon>
        <taxon>Chordata</taxon>
        <taxon>Craniata</taxon>
        <taxon>Vertebrata</taxon>
        <taxon>Euteleostomi</taxon>
        <taxon>Mammalia</taxon>
        <taxon>Eutheria</taxon>
        <taxon>Euarchontoglires</taxon>
        <taxon>Glires</taxon>
        <taxon>Rodentia</taxon>
        <taxon>Myomorpha</taxon>
        <taxon>Muroidea</taxon>
        <taxon>Muridae</taxon>
        <taxon>Murinae</taxon>
        <taxon>Rattus</taxon>
    </lineage>
</organism>
<comment type="function">
    <text evidence="1">Glycosyltransferase which elongates the O-linked glucose attached to EGF-like repeats in the extracellular domain of Notch proteins by catalyzing the addition of xylose.</text>
</comment>
<comment type="catalytic activity">
    <reaction evidence="1">
        <text>3-O-(beta-D-glucosyl)-L-seryl-[EGF-like domain protein] + UDP-alpha-D-xylose = 3-O-[alpha-D-xylosyl-(1-&gt;3)-beta-D-glucosyl]-L-seryl-[EGF-like domain protein] + UDP + H(+)</text>
        <dbReference type="Rhea" id="RHEA:56064"/>
        <dbReference type="Rhea" id="RHEA-COMP:14610"/>
        <dbReference type="Rhea" id="RHEA-COMP:14611"/>
        <dbReference type="ChEBI" id="CHEBI:15378"/>
        <dbReference type="ChEBI" id="CHEBI:57632"/>
        <dbReference type="ChEBI" id="CHEBI:58223"/>
        <dbReference type="ChEBI" id="CHEBI:140575"/>
        <dbReference type="ChEBI" id="CHEBI:140576"/>
        <dbReference type="EC" id="2.4.2.42"/>
    </reaction>
</comment>
<comment type="subcellular location">
    <subcellularLocation>
        <location evidence="4">Membrane</location>
        <topology evidence="4">Single-pass type II membrane protein</topology>
    </subcellularLocation>
</comment>
<comment type="induction">
    <text evidence="3">By E2F1.</text>
</comment>
<comment type="similarity">
    <text evidence="4">Belongs to the glycosyltransferase 8 family.</text>
</comment>
<gene>
    <name type="primary">Gxylt1</name>
    <name type="synonym">Glt8d3</name>
</gene>
<keyword id="KW-0325">Glycoprotein</keyword>
<keyword id="KW-0328">Glycosyltransferase</keyword>
<keyword id="KW-0472">Membrane</keyword>
<keyword id="KW-1185">Reference proteome</keyword>
<keyword id="KW-0735">Signal-anchor</keyword>
<keyword id="KW-0808">Transferase</keyword>
<keyword id="KW-0812">Transmembrane</keyword>
<keyword id="KW-1133">Transmembrane helix</keyword>
<accession>Q6GX83</accession>
<evidence type="ECO:0000250" key="1">
    <source>
        <dbReference type="UniProtKB" id="Q4G148"/>
    </source>
</evidence>
<evidence type="ECO:0000255" key="2"/>
<evidence type="ECO:0000269" key="3">
    <source>
    </source>
</evidence>
<evidence type="ECO:0000305" key="4"/>
<name>GXLT1_RAT</name>
<dbReference type="EC" id="2.4.2.42" evidence="1"/>
<dbReference type="EMBL" id="AABR03055509">
    <property type="status" value="NOT_ANNOTATED_CDS"/>
    <property type="molecule type" value="Genomic_DNA"/>
</dbReference>
<dbReference type="EMBL" id="AABR03055661">
    <property type="status" value="NOT_ANNOTATED_CDS"/>
    <property type="molecule type" value="Genomic_DNA"/>
</dbReference>
<dbReference type="EMBL" id="AY623036">
    <property type="protein sequence ID" value="AAT46050.1"/>
    <property type="molecule type" value="mRNA"/>
</dbReference>
<dbReference type="RefSeq" id="NP_001094357.1">
    <property type="nucleotide sequence ID" value="NM_001100887.1"/>
</dbReference>
<dbReference type="SMR" id="Q6GX83"/>
<dbReference type="FunCoup" id="Q6GX83">
    <property type="interactions" value="3282"/>
</dbReference>
<dbReference type="STRING" id="10116.ENSRNOP00000055150"/>
<dbReference type="GlyCosmos" id="Q6GX83">
    <property type="glycosylation" value="2 sites, No reported glycans"/>
</dbReference>
<dbReference type="GlyGen" id="Q6GX83">
    <property type="glycosylation" value="2 sites"/>
</dbReference>
<dbReference type="PhosphoSitePlus" id="Q6GX83"/>
<dbReference type="PaxDb" id="10116-ENSRNOP00000055150"/>
<dbReference type="Ensembl" id="ENSRNOT00000058349.4">
    <property type="protein sequence ID" value="ENSRNOP00000055150.2"/>
    <property type="gene ID" value="ENSRNOG00000005234.8"/>
</dbReference>
<dbReference type="GeneID" id="300173"/>
<dbReference type="KEGG" id="rno:300173"/>
<dbReference type="AGR" id="RGD:1563062"/>
<dbReference type="CTD" id="283464"/>
<dbReference type="RGD" id="1563062">
    <property type="gene designation" value="Gxylt1"/>
</dbReference>
<dbReference type="eggNOG" id="KOG3765">
    <property type="taxonomic scope" value="Eukaryota"/>
</dbReference>
<dbReference type="GeneTree" id="ENSGT00940000156242"/>
<dbReference type="InParanoid" id="Q6GX83"/>
<dbReference type="OMA" id="IPIHKEY"/>
<dbReference type="OrthoDB" id="6238971at2759"/>
<dbReference type="PhylomeDB" id="Q6GX83"/>
<dbReference type="TreeFam" id="TF323210"/>
<dbReference type="PRO" id="PR:Q6GX83"/>
<dbReference type="Proteomes" id="UP000002494">
    <property type="component" value="Chromosome 7"/>
</dbReference>
<dbReference type="Bgee" id="ENSRNOG00000005234">
    <property type="expression patterns" value="Expressed in testis and 20 other cell types or tissues"/>
</dbReference>
<dbReference type="ExpressionAtlas" id="Q6GX83">
    <property type="expression patterns" value="baseline and differential"/>
</dbReference>
<dbReference type="GO" id="GO:0016020">
    <property type="term" value="C:membrane"/>
    <property type="evidence" value="ECO:0007669"/>
    <property type="project" value="UniProtKB-SubCell"/>
</dbReference>
<dbReference type="GO" id="GO:0140563">
    <property type="term" value="F:UDP-D-xylose:beta-D-glucoside alpha-1,3-D-xylosyltransferase activity"/>
    <property type="evidence" value="ECO:0007669"/>
    <property type="project" value="UniProtKB-EC"/>
</dbReference>
<dbReference type="GO" id="GO:0035252">
    <property type="term" value="F:UDP-xylosyltransferase activity"/>
    <property type="evidence" value="ECO:0000250"/>
    <property type="project" value="UniProtKB"/>
</dbReference>
<dbReference type="GO" id="GO:0016266">
    <property type="term" value="P:O-glycan processing"/>
    <property type="evidence" value="ECO:0000250"/>
    <property type="project" value="UniProtKB"/>
</dbReference>
<dbReference type="CDD" id="cd06430">
    <property type="entry name" value="GT8_like_2"/>
    <property type="match status" value="1"/>
</dbReference>
<dbReference type="FunFam" id="3.90.550.10:FF:000042">
    <property type="entry name" value="Glucoside xylosyltransferase 1"/>
    <property type="match status" value="1"/>
</dbReference>
<dbReference type="Gene3D" id="3.90.550.10">
    <property type="entry name" value="Spore Coat Polysaccharide Biosynthesis Protein SpsA, Chain A"/>
    <property type="match status" value="1"/>
</dbReference>
<dbReference type="InterPro" id="IPR002495">
    <property type="entry name" value="Glyco_trans_8"/>
</dbReference>
<dbReference type="InterPro" id="IPR051993">
    <property type="entry name" value="Glycosyltransferase_8"/>
</dbReference>
<dbReference type="InterPro" id="IPR029044">
    <property type="entry name" value="Nucleotide-diphossugar_trans"/>
</dbReference>
<dbReference type="PANTHER" id="PTHR46012:SF3">
    <property type="entry name" value="GLUCOSIDE XYLOSYLTRANSFERASE 1"/>
    <property type="match status" value="1"/>
</dbReference>
<dbReference type="PANTHER" id="PTHR46012">
    <property type="entry name" value="IP22168P"/>
    <property type="match status" value="1"/>
</dbReference>
<dbReference type="Pfam" id="PF01501">
    <property type="entry name" value="Glyco_transf_8"/>
    <property type="match status" value="1"/>
</dbReference>
<dbReference type="SUPFAM" id="SSF53448">
    <property type="entry name" value="Nucleotide-diphospho-sugar transferases"/>
    <property type="match status" value="1"/>
</dbReference>
<reference key="1">
    <citation type="journal article" date="2004" name="Nature">
        <title>Genome sequence of the Brown Norway rat yields insights into mammalian evolution.</title>
        <authorList>
            <person name="Gibbs R.A."/>
            <person name="Weinstock G.M."/>
            <person name="Metzker M.L."/>
            <person name="Muzny D.M."/>
            <person name="Sodergren E.J."/>
            <person name="Scherer S."/>
            <person name="Scott G."/>
            <person name="Steffen D."/>
            <person name="Worley K.C."/>
            <person name="Burch P.E."/>
            <person name="Okwuonu G."/>
            <person name="Hines S."/>
            <person name="Lewis L."/>
            <person name="Deramo C."/>
            <person name="Delgado O."/>
            <person name="Dugan-Rocha S."/>
            <person name="Miner G."/>
            <person name="Morgan M."/>
            <person name="Hawes A."/>
            <person name="Gill R."/>
            <person name="Holt R.A."/>
            <person name="Adams M.D."/>
            <person name="Amanatides P.G."/>
            <person name="Baden-Tillson H."/>
            <person name="Barnstead M."/>
            <person name="Chin S."/>
            <person name="Evans C.A."/>
            <person name="Ferriera S."/>
            <person name="Fosler C."/>
            <person name="Glodek A."/>
            <person name="Gu Z."/>
            <person name="Jennings D."/>
            <person name="Kraft C.L."/>
            <person name="Nguyen T."/>
            <person name="Pfannkoch C.M."/>
            <person name="Sitter C."/>
            <person name="Sutton G.G."/>
            <person name="Venter J.C."/>
            <person name="Woodage T."/>
            <person name="Smith D."/>
            <person name="Lee H.-M."/>
            <person name="Gustafson E."/>
            <person name="Cahill P."/>
            <person name="Kana A."/>
            <person name="Doucette-Stamm L."/>
            <person name="Weinstock K."/>
            <person name="Fechtel K."/>
            <person name="Weiss R.B."/>
            <person name="Dunn D.M."/>
            <person name="Green E.D."/>
            <person name="Blakesley R.W."/>
            <person name="Bouffard G.G."/>
            <person name="De Jong P.J."/>
            <person name="Osoegawa K."/>
            <person name="Zhu B."/>
            <person name="Marra M."/>
            <person name="Schein J."/>
            <person name="Bosdet I."/>
            <person name="Fjell C."/>
            <person name="Jones S."/>
            <person name="Krzywinski M."/>
            <person name="Mathewson C."/>
            <person name="Siddiqui A."/>
            <person name="Wye N."/>
            <person name="McPherson J."/>
            <person name="Zhao S."/>
            <person name="Fraser C.M."/>
            <person name="Shetty J."/>
            <person name="Shatsman S."/>
            <person name="Geer K."/>
            <person name="Chen Y."/>
            <person name="Abramzon S."/>
            <person name="Nierman W.C."/>
            <person name="Havlak P.H."/>
            <person name="Chen R."/>
            <person name="Durbin K.J."/>
            <person name="Egan A."/>
            <person name="Ren Y."/>
            <person name="Song X.-Z."/>
            <person name="Li B."/>
            <person name="Liu Y."/>
            <person name="Qin X."/>
            <person name="Cawley S."/>
            <person name="Cooney A.J."/>
            <person name="D'Souza L.M."/>
            <person name="Martin K."/>
            <person name="Wu J.Q."/>
            <person name="Gonzalez-Garay M.L."/>
            <person name="Jackson A.R."/>
            <person name="Kalafus K.J."/>
            <person name="McLeod M.P."/>
            <person name="Milosavljevic A."/>
            <person name="Virk D."/>
            <person name="Volkov A."/>
            <person name="Wheeler D.A."/>
            <person name="Zhang Z."/>
            <person name="Bailey J.A."/>
            <person name="Eichler E.E."/>
            <person name="Tuzun E."/>
            <person name="Birney E."/>
            <person name="Mongin E."/>
            <person name="Ureta-Vidal A."/>
            <person name="Woodwark C."/>
            <person name="Zdobnov E."/>
            <person name="Bork P."/>
            <person name="Suyama M."/>
            <person name="Torrents D."/>
            <person name="Alexandersson M."/>
            <person name="Trask B.J."/>
            <person name="Young J.M."/>
            <person name="Huang H."/>
            <person name="Wang H."/>
            <person name="Xing H."/>
            <person name="Daniels S."/>
            <person name="Gietzen D."/>
            <person name="Schmidt J."/>
            <person name="Stevens K."/>
            <person name="Vitt U."/>
            <person name="Wingrove J."/>
            <person name="Camara F."/>
            <person name="Mar Alba M."/>
            <person name="Abril J.F."/>
            <person name="Guigo R."/>
            <person name="Smit A."/>
            <person name="Dubchak I."/>
            <person name="Rubin E.M."/>
            <person name="Couronne O."/>
            <person name="Poliakov A."/>
            <person name="Huebner N."/>
            <person name="Ganten D."/>
            <person name="Goesele C."/>
            <person name="Hummel O."/>
            <person name="Kreitler T."/>
            <person name="Lee Y.-A."/>
            <person name="Monti J."/>
            <person name="Schulz H."/>
            <person name="Zimdahl H."/>
            <person name="Himmelbauer H."/>
            <person name="Lehrach H."/>
            <person name="Jacob H.J."/>
            <person name="Bromberg S."/>
            <person name="Gullings-Handley J."/>
            <person name="Jensen-Seaman M.I."/>
            <person name="Kwitek A.E."/>
            <person name="Lazar J."/>
            <person name="Pasko D."/>
            <person name="Tonellato P.J."/>
            <person name="Twigger S."/>
            <person name="Ponting C.P."/>
            <person name="Duarte J.M."/>
            <person name="Rice S."/>
            <person name="Goodstadt L."/>
            <person name="Beatson S.A."/>
            <person name="Emes R.D."/>
            <person name="Winter E.E."/>
            <person name="Webber C."/>
            <person name="Brandt P."/>
            <person name="Nyakatura G."/>
            <person name="Adetobi M."/>
            <person name="Chiaromonte F."/>
            <person name="Elnitski L."/>
            <person name="Eswara P."/>
            <person name="Hardison R.C."/>
            <person name="Hou M."/>
            <person name="Kolbe D."/>
            <person name="Makova K."/>
            <person name="Miller W."/>
            <person name="Nekrutenko A."/>
            <person name="Riemer C."/>
            <person name="Schwartz S."/>
            <person name="Taylor J."/>
            <person name="Yang S."/>
            <person name="Zhang Y."/>
            <person name="Lindpaintner K."/>
            <person name="Andrews T.D."/>
            <person name="Caccamo M."/>
            <person name="Clamp M."/>
            <person name="Clarke L."/>
            <person name="Curwen V."/>
            <person name="Durbin R.M."/>
            <person name="Eyras E."/>
            <person name="Searle S.M."/>
            <person name="Cooper G.M."/>
            <person name="Batzoglou S."/>
            <person name="Brudno M."/>
            <person name="Sidow A."/>
            <person name="Stone E.A."/>
            <person name="Payseur B.A."/>
            <person name="Bourque G."/>
            <person name="Lopez-Otin C."/>
            <person name="Puente X.S."/>
            <person name="Chakrabarti K."/>
            <person name="Chatterji S."/>
            <person name="Dewey C."/>
            <person name="Pachter L."/>
            <person name="Bray N."/>
            <person name="Yap V.B."/>
            <person name="Caspi A."/>
            <person name="Tesler G."/>
            <person name="Pevzner P.A."/>
            <person name="Haussler D."/>
            <person name="Roskin K.M."/>
            <person name="Baertsch R."/>
            <person name="Clawson H."/>
            <person name="Furey T.S."/>
            <person name="Hinrichs A.S."/>
            <person name="Karolchik D."/>
            <person name="Kent W.J."/>
            <person name="Rosenbloom K.R."/>
            <person name="Trumbower H."/>
            <person name="Weirauch M."/>
            <person name="Cooper D.N."/>
            <person name="Stenson P.D."/>
            <person name="Ma B."/>
            <person name="Brent M."/>
            <person name="Arumugam M."/>
            <person name="Shteynberg D."/>
            <person name="Copley R.R."/>
            <person name="Taylor M.S."/>
            <person name="Riethman H."/>
            <person name="Mudunuri U."/>
            <person name="Peterson J."/>
            <person name="Guyer M."/>
            <person name="Felsenfeld A."/>
            <person name="Old S."/>
            <person name="Mockrin S."/>
            <person name="Collins F.S."/>
        </authorList>
    </citation>
    <scope>NUCLEOTIDE SEQUENCE [LARGE SCALE GENOMIC DNA]</scope>
    <source>
        <strain>Brown Norway</strain>
    </source>
</reference>
<reference key="2">
    <citation type="journal article" date="2006" name="Oncogene">
        <title>Identification of novel E2F1 target genes regulated in cell cycle-dependent and independent manners.</title>
        <authorList>
            <person name="Iwanaga R."/>
            <person name="Komori H."/>
            <person name="Ishida S."/>
            <person name="Okamura N."/>
            <person name="Nakayama K."/>
            <person name="Nakayama K."/>
            <person name="Ohtani K."/>
        </authorList>
    </citation>
    <scope>NUCLEOTIDE SEQUENCE [MRNA] OF 117-435</scope>
    <scope>INDUCTION</scope>
</reference>
<proteinExistence type="evidence at transcript level"/>
<feature type="chain" id="PRO_0000288536" description="Glucoside xylosyltransferase 1">
    <location>
        <begin position="1"/>
        <end position="435"/>
    </location>
</feature>
<feature type="topological domain" description="Cytoplasmic" evidence="2">
    <location>
        <begin position="1"/>
        <end position="6"/>
    </location>
</feature>
<feature type="transmembrane region" description="Helical; Signal-anchor for type II membrane protein" evidence="2">
    <location>
        <begin position="7"/>
        <end position="29"/>
    </location>
</feature>
<feature type="topological domain" description="Lumenal" evidence="2">
    <location>
        <begin position="30"/>
        <end position="435"/>
    </location>
</feature>
<feature type="glycosylation site" description="N-linked (GlcNAc...) asparagine" evidence="2">
    <location>
        <position position="168"/>
    </location>
</feature>
<feature type="glycosylation site" description="N-linked (GlcNAc...) asparagine" evidence="2">
    <location>
        <position position="232"/>
    </location>
</feature>